<keyword id="KW-0119">Carbohydrate metabolism</keyword>
<keyword id="KW-0325">Glycoprotein</keyword>
<keyword id="KW-0326">Glycosidase</keyword>
<keyword id="KW-0378">Hydrolase</keyword>
<keyword id="KW-0460">Magnesium</keyword>
<keyword id="KW-0520">NAD</keyword>
<keyword id="KW-0624">Polysaccharide degradation</keyword>
<keyword id="KW-0964">Secreted</keyword>
<keyword id="KW-0732">Signal</keyword>
<proteinExistence type="inferred from homology"/>
<comment type="function">
    <text evidence="1">Hydrolyzes a variety of simple alpha-D-galactoside as well as more complex molecules such as oligosaccharides and polysaccharides.</text>
</comment>
<comment type="catalytic activity">
    <reaction>
        <text>Hydrolysis of terminal, non-reducing alpha-D-galactose residues in alpha-D-galactosides, including galactose oligosaccharides, galactomannans and galactolipids.</text>
        <dbReference type="EC" id="3.2.1.22"/>
    </reaction>
</comment>
<comment type="cofactor">
    <cofactor evidence="1">
        <name>Mg(2+)</name>
        <dbReference type="ChEBI" id="CHEBI:18420"/>
    </cofactor>
</comment>
<comment type="cofactor">
    <cofactor evidence="1">
        <name>NAD(+)</name>
        <dbReference type="ChEBI" id="CHEBI:57540"/>
    </cofactor>
</comment>
<comment type="subunit">
    <text evidence="1">Homotetramer.</text>
</comment>
<comment type="subcellular location">
    <subcellularLocation>
        <location evidence="1">Secreted</location>
    </subcellularLocation>
</comment>
<comment type="similarity">
    <text evidence="4">Belongs to the glycosyl hydrolase 36 family.</text>
</comment>
<comment type="sequence caution" evidence="4">
    <conflict type="erroneous gene model prediction">
        <sequence resource="EMBL-CDS" id="EED45944"/>
    </conflict>
</comment>
<feature type="signal peptide" evidence="3">
    <location>
        <begin position="1"/>
        <end position="27"/>
    </location>
</feature>
<feature type="chain" id="PRO_0000395064" description="Probable alpha-galactosidase C">
    <location>
        <begin position="28"/>
        <end position="751"/>
    </location>
</feature>
<feature type="active site" description="Nucleophile" evidence="2">
    <location>
        <position position="510"/>
    </location>
</feature>
<feature type="active site" description="Proton donor" evidence="2">
    <location>
        <position position="572"/>
    </location>
</feature>
<feature type="glycosylation site" description="N-linked (GlcNAc...) asparagine" evidence="3">
    <location>
        <position position="49"/>
    </location>
</feature>
<feature type="glycosylation site" description="N-linked (GlcNAc...) asparagine" evidence="3">
    <location>
        <position position="57"/>
    </location>
</feature>
<feature type="glycosylation site" description="N-linked (GlcNAc...) asparagine" evidence="3">
    <location>
        <position position="162"/>
    </location>
</feature>
<feature type="glycosylation site" description="N-linked (GlcNAc...) asparagine" evidence="3">
    <location>
        <position position="186"/>
    </location>
</feature>
<feature type="glycosylation site" description="N-linked (GlcNAc...) asparagine" evidence="3">
    <location>
        <position position="194"/>
    </location>
</feature>
<feature type="glycosylation site" description="N-linked (GlcNAc...) asparagine" evidence="3">
    <location>
        <position position="366"/>
    </location>
</feature>
<feature type="glycosylation site" description="N-linked (GlcNAc...) asparagine" evidence="3">
    <location>
        <position position="433"/>
    </location>
</feature>
<feature type="glycosylation site" description="N-linked (GlcNAc...) asparagine" evidence="3">
    <location>
        <position position="452"/>
    </location>
</feature>
<feature type="glycosylation site" description="N-linked (GlcNAc...) asparagine" evidence="3">
    <location>
        <position position="500"/>
    </location>
</feature>
<feature type="glycosylation site" description="N-linked (GlcNAc...) asparagine" evidence="3">
    <location>
        <position position="720"/>
    </location>
</feature>
<dbReference type="EC" id="3.2.1.22"/>
<dbReference type="EMBL" id="EQ963485">
    <property type="protein sequence ID" value="EED45944.1"/>
    <property type="status" value="ALT_SEQ"/>
    <property type="molecule type" value="Genomic_DNA"/>
</dbReference>
<dbReference type="RefSeq" id="XP_002384880.1">
    <property type="nucleotide sequence ID" value="XM_002384839.1"/>
</dbReference>
<dbReference type="SMR" id="B8NWY6"/>
<dbReference type="STRING" id="332952.B8NWY6"/>
<dbReference type="GlyCosmos" id="B8NWY6">
    <property type="glycosylation" value="10 sites, No reported glycans"/>
</dbReference>
<dbReference type="EnsemblFungi" id="EED45944">
    <property type="protein sequence ID" value="EED45944"/>
    <property type="gene ID" value="AFLA_121730"/>
</dbReference>
<dbReference type="VEuPathDB" id="FungiDB:AFLA_014177"/>
<dbReference type="eggNOG" id="ENOG502QWG1">
    <property type="taxonomic scope" value="Eukaryota"/>
</dbReference>
<dbReference type="GO" id="GO:0005576">
    <property type="term" value="C:extracellular region"/>
    <property type="evidence" value="ECO:0007669"/>
    <property type="project" value="UniProtKB-SubCell"/>
</dbReference>
<dbReference type="GO" id="GO:0004557">
    <property type="term" value="F:alpha-galactosidase activity"/>
    <property type="evidence" value="ECO:0007669"/>
    <property type="project" value="UniProtKB-EC"/>
</dbReference>
<dbReference type="GO" id="GO:0000272">
    <property type="term" value="P:polysaccharide catabolic process"/>
    <property type="evidence" value="ECO:0007669"/>
    <property type="project" value="UniProtKB-KW"/>
</dbReference>
<dbReference type="CDD" id="cd14791">
    <property type="entry name" value="GH36"/>
    <property type="match status" value="1"/>
</dbReference>
<dbReference type="FunFam" id="2.60.40.1180:FF:000028">
    <property type="entry name" value="Alpha-galactosidase"/>
    <property type="match status" value="1"/>
</dbReference>
<dbReference type="FunFam" id="3.20.20.70:FF:000118">
    <property type="entry name" value="Alpha-galactosidase"/>
    <property type="match status" value="1"/>
</dbReference>
<dbReference type="Gene3D" id="3.20.20.70">
    <property type="entry name" value="Aldolase class I"/>
    <property type="match status" value="1"/>
</dbReference>
<dbReference type="Gene3D" id="2.70.98.60">
    <property type="entry name" value="alpha-galactosidase from lactobacil brevis"/>
    <property type="match status" value="1"/>
</dbReference>
<dbReference type="Gene3D" id="2.60.40.1180">
    <property type="entry name" value="Golgi alpha-mannosidase II"/>
    <property type="match status" value="1"/>
</dbReference>
<dbReference type="InterPro" id="IPR013785">
    <property type="entry name" value="Aldolase_TIM"/>
</dbReference>
<dbReference type="InterPro" id="IPR038417">
    <property type="entry name" value="Alpga-gal_N_sf"/>
</dbReference>
<dbReference type="InterPro" id="IPR050985">
    <property type="entry name" value="Alpha-glycosidase_related"/>
</dbReference>
<dbReference type="InterPro" id="IPR000111">
    <property type="entry name" value="Glyco_hydro_27/36_CS"/>
</dbReference>
<dbReference type="InterPro" id="IPR002252">
    <property type="entry name" value="Glyco_hydro_36"/>
</dbReference>
<dbReference type="InterPro" id="IPR031705">
    <property type="entry name" value="Glyco_hydro_36_C"/>
</dbReference>
<dbReference type="InterPro" id="IPR031704">
    <property type="entry name" value="Glyco_hydro_36_N"/>
</dbReference>
<dbReference type="InterPro" id="IPR013780">
    <property type="entry name" value="Glyco_hydro_b"/>
</dbReference>
<dbReference type="InterPro" id="IPR017853">
    <property type="entry name" value="Glycoside_hydrolase_SF"/>
</dbReference>
<dbReference type="PANTHER" id="PTHR43053:SF3">
    <property type="entry name" value="ALPHA-GALACTOSIDASE C-RELATED"/>
    <property type="match status" value="1"/>
</dbReference>
<dbReference type="PANTHER" id="PTHR43053">
    <property type="entry name" value="GLYCOSIDASE FAMILY 31"/>
    <property type="match status" value="1"/>
</dbReference>
<dbReference type="Pfam" id="PF16874">
    <property type="entry name" value="Glyco_hydro_36C"/>
    <property type="match status" value="1"/>
</dbReference>
<dbReference type="Pfam" id="PF16875">
    <property type="entry name" value="Glyco_hydro_36N"/>
    <property type="match status" value="1"/>
</dbReference>
<dbReference type="Pfam" id="PF02065">
    <property type="entry name" value="Melibiase"/>
    <property type="match status" value="1"/>
</dbReference>
<dbReference type="PIRSF" id="PIRSF005536">
    <property type="entry name" value="Agal"/>
    <property type="match status" value="1"/>
</dbReference>
<dbReference type="PRINTS" id="PR00743">
    <property type="entry name" value="GLHYDRLASE36"/>
</dbReference>
<dbReference type="SUPFAM" id="SSF51445">
    <property type="entry name" value="(Trans)glycosidases"/>
    <property type="match status" value="1"/>
</dbReference>
<dbReference type="PROSITE" id="PS00512">
    <property type="entry name" value="ALPHA_GALACTOSIDASE"/>
    <property type="match status" value="1"/>
</dbReference>
<evidence type="ECO:0000250" key="1"/>
<evidence type="ECO:0000250" key="2">
    <source>
        <dbReference type="UniProtKB" id="Q9ALJ4"/>
    </source>
</evidence>
<evidence type="ECO:0000255" key="3"/>
<evidence type="ECO:0000305" key="4"/>
<organism>
    <name type="scientific">Aspergillus flavus (strain ATCC 200026 / FGSC A1120 / IAM 13836 / NRRL 3357 / JCM 12722 / SRRC 167)</name>
    <dbReference type="NCBI Taxonomy" id="332952"/>
    <lineage>
        <taxon>Eukaryota</taxon>
        <taxon>Fungi</taxon>
        <taxon>Dikarya</taxon>
        <taxon>Ascomycota</taxon>
        <taxon>Pezizomycotina</taxon>
        <taxon>Eurotiomycetes</taxon>
        <taxon>Eurotiomycetidae</taxon>
        <taxon>Eurotiales</taxon>
        <taxon>Aspergillaceae</taxon>
        <taxon>Aspergillus</taxon>
        <taxon>Aspergillus subgen. Circumdati</taxon>
    </lineage>
</organism>
<name>AGALC_ASPFN</name>
<accession>B8NWY6</accession>
<reference key="1">
    <citation type="journal article" date="2015" name="Genome Announc.">
        <title>Genome sequence of Aspergillus flavus NRRL 3357, a strain that causes aflatoxin contamination of food and feed.</title>
        <authorList>
            <person name="Nierman W.C."/>
            <person name="Yu J."/>
            <person name="Fedorova-Abrams N.D."/>
            <person name="Losada L."/>
            <person name="Cleveland T.E."/>
            <person name="Bhatnagar D."/>
            <person name="Bennett J.W."/>
            <person name="Dean R."/>
            <person name="Payne G.A."/>
        </authorList>
    </citation>
    <scope>NUCLEOTIDE SEQUENCE [LARGE SCALE GENOMIC DNA]</scope>
    <source>
        <strain>ATCC 200026 / FGSC A1120 / IAM 13836 / NRRL 3357 / JCM 12722 / SRRC 167</strain>
    </source>
</reference>
<protein>
    <recommendedName>
        <fullName>Probable alpha-galactosidase C</fullName>
        <ecNumber>3.2.1.22</ecNumber>
    </recommendedName>
    <alternativeName>
        <fullName>Melibiase C</fullName>
    </alternativeName>
</protein>
<sequence>MFGSPKRAALAAASLLAIFGNGPSVMAQETSSNNAVVADGKTFALNGENVSYRFRVNETTGDLVSDHFGGSITGDLFPGFGAEALGGWVGLAGRFRREFPDHGRGDFRIPAVRIRQEAGYTVTDLQYQSYSVIPGKPALPGLPSTFGSEEDVTTLVVHLYDNYSSIAVDLSYSIFPKYDAIVRSANVTNKGTQNITVEALSSFSFDFPYEDLEMISLRGDWAREAHRQRRKVEYGLQGFGSSTGFSSHLHNPFLAIVHPSTTESQGEAWGFNLVYTGSFSVDVEKGSQGLTRALLGFNPSQLSWQLGAGETLTSPECVSVYSSDGIGGMSRSFHRLYRNHLIKSKFATSDRPPLLNSWEGLYFDYNESTIYRLAEESAALGVKLFVMDDGWFGDKYPRVSDNAGLGDWVPNPDRFPDGLTPLVEDVTKLKAGNSSTDLRFGLWVEPEMANPNSTLYHEHPDWVLHAGQYPRTLQRNQLVLNLALPEVQDYIIDEITNILNSSAISYVKWDFNRAMHETPSPSNDHEYILGMYRVFDTLTTRFPDVLWEGCASGGGRFDPGVLEYFPQIWTSDNTDALMRITIQLGTSLAYPPSAMGAHLSAVPNAQTGRTIPVKFRGHVAMMGGSFGLELDPAELQEDEKAEVPGLIALAEKVNPIILTGDMWRLRLPEESNWPAVLFISEDGNQAVLFYFQLGPNVNHATPWLRLQGLDPKATYSVDGNGSYSGATLMNMGLQYKFESDYDSKVVFLQKQ</sequence>
<gene>
    <name type="primary">aglC</name>
    <name type="ORF">AFLA_121730</name>
</gene>